<sequence length="123" mass="12966">GIVEGLMTTVHAITATQKTVDGPSGKLWRDGRAAAQNIIPASTGAAKAVGKVIPELNGKLTGMAFRVPTPNVSVVDLTCRLEKPAKYDDIKKVVKQASEGSLKGILGYTEDQVVSCDFNSDTH</sequence>
<protein>
    <recommendedName>
        <fullName>Glyceraldehyde-3-phosphate dehydrogenase</fullName>
        <shortName>GAPDH</shortName>
        <ecNumber evidence="2">1.2.1.12</ecNumber>
    </recommendedName>
    <alternativeName>
        <fullName evidence="8">Peptidyl-cysteine S-nitrosylase GAPDH</fullName>
        <ecNumber evidence="3">2.6.99.-</ecNumber>
    </alternativeName>
</protein>
<gene>
    <name type="primary">GAPDH</name>
    <name type="synonym">GAPD</name>
</gene>
<organism>
    <name type="scientific">Cavia porcellus</name>
    <name type="common">Guinea pig</name>
    <dbReference type="NCBI Taxonomy" id="10141"/>
    <lineage>
        <taxon>Eukaryota</taxon>
        <taxon>Metazoa</taxon>
        <taxon>Chordata</taxon>
        <taxon>Craniata</taxon>
        <taxon>Vertebrata</taxon>
        <taxon>Euteleostomi</taxon>
        <taxon>Mammalia</taxon>
        <taxon>Eutheria</taxon>
        <taxon>Euarchontoglires</taxon>
        <taxon>Glires</taxon>
        <taxon>Rodentia</taxon>
        <taxon>Hystricomorpha</taxon>
        <taxon>Caviidae</taxon>
        <taxon>Cavia</taxon>
    </lineage>
</organism>
<comment type="function">
    <text evidence="2 3">Has both glyceraldehyde-3-phosphate dehydrogenase and nitrosylase activities, thereby playing a role in glycolysis and nuclear functions, respectively. Glyceraldehyde-3-phosphate dehydrogenase is a key enzyme in glycolysis that catalyzes the first step of the pathway by converting D-glyceraldehyde 3-phosphate (G3P) into 3-phospho-D-glyceroyl phosphate (By similarity). Modulates the organization and assembly of the cytoskeleton. Facilitates the CHP1-dependent microtubule and membrane associations through its ability to stimulate the binding of CHP1 to microtubules (By similarity). Component of the GAIT (gamma interferon-activated inhibitor of translation) complex which mediates interferon-gamma-induced transcript-selective translation inhibition in inflammation processes. Upon interferon-gamma treatment assembles into the GAIT complex which binds to stem loop-containing GAIT elements in the 3'-UTR of diverse inflammatory mRNAs (such as ceruplasmin) and suppresses their translation. Also plays a role in innate immunity by promoting TNF-induced NF-kappa-B activation and type I interferon production, via interaction with TRAF2 and TRAF3, respectively (By similarity). Participates in nuclear events including transcription, RNA transport, DNA replication and apoptosis. Nuclear functions are probably due to the nitrosylase activity that mediates cysteine S-nitrosylation of nuclear target proteins such as SIRT1, HDAC2 and PRKDC (By similarity).</text>
</comment>
<comment type="catalytic activity">
    <reaction evidence="2 7">
        <text>D-glyceraldehyde 3-phosphate + phosphate + NAD(+) = (2R)-3-phospho-glyceroyl phosphate + NADH + H(+)</text>
        <dbReference type="Rhea" id="RHEA:10300"/>
        <dbReference type="ChEBI" id="CHEBI:15378"/>
        <dbReference type="ChEBI" id="CHEBI:43474"/>
        <dbReference type="ChEBI" id="CHEBI:57540"/>
        <dbReference type="ChEBI" id="CHEBI:57604"/>
        <dbReference type="ChEBI" id="CHEBI:57945"/>
        <dbReference type="ChEBI" id="CHEBI:59776"/>
        <dbReference type="EC" id="1.2.1.12"/>
    </reaction>
</comment>
<comment type="catalytic activity">
    <reaction evidence="3">
        <text>S-nitroso-L-cysteinyl-[GAPDH] + L-cysteinyl-[protein] = L-cysteinyl-[GAPDH] + S-nitroso-L-cysteinyl-[protein]</text>
        <dbReference type="Rhea" id="RHEA:66684"/>
        <dbReference type="Rhea" id="RHEA-COMP:10131"/>
        <dbReference type="Rhea" id="RHEA-COMP:17089"/>
        <dbReference type="Rhea" id="RHEA-COMP:17090"/>
        <dbReference type="Rhea" id="RHEA-COMP:17091"/>
        <dbReference type="ChEBI" id="CHEBI:29950"/>
        <dbReference type="ChEBI" id="CHEBI:149494"/>
    </reaction>
    <physiologicalReaction direction="left-to-right" evidence="3">
        <dbReference type="Rhea" id="RHEA:66685"/>
    </physiologicalReaction>
</comment>
<comment type="activity regulation">
    <text evidence="3">Glyceraldehyde-3-phosphate dehydrogenase activity is inhibited by fumarate, via the formation of S-(2-succinyl)cysteine residues.</text>
</comment>
<comment type="pathway">
    <text>Carbohydrate degradation; glycolysis; pyruvate from D-glyceraldehyde 3-phosphate: step 1/5.</text>
</comment>
<comment type="subunit">
    <text evidence="2 3 4">Homotetramer (By similarity). Interacts with TPPP; the interaction is direct (By similarity). Interacts (when S-nitrosylated) with SIAH1; leading to nuclear translocation. Interacts with RILPL1/GOSPEL, leading to prevent the interaction between GAPDH and SIAH1 and prevent nuclear translocation. Interacts with CHP1; the interaction increases the binding of CHP1 with microtubules. Associates with microtubules (By similarity). Interacts with EIF1AD, USP25, PRKCI and WARS1. Interacts with phosphorylated RPL13A; inhibited by oxidatively-modified low-densitity lipoprotein (LDL(ox)). Component of the GAIT complex. Interacts with FKBP6; leading to inhibit GAPDH catalytic activity. Interacts with TRAF2, promoting TRAF2 ubiquitination. Interacts with TRAF3, promoting TRAF3 ubiquitination (By similarity).</text>
</comment>
<comment type="subcellular location">
    <subcellularLocation>
        <location evidence="3">Cytoplasm</location>
        <location evidence="3">Cytosol</location>
    </subcellularLocation>
    <subcellularLocation>
        <location evidence="3">Cytoplasm</location>
        <location evidence="3">Cytoskeleton</location>
    </subcellularLocation>
    <subcellularLocation>
        <location evidence="3">Nucleus</location>
    </subcellularLocation>
    <text evidence="3">Translocates to the nucleus following S-nitrosylation and interaction with SIAH1, which contains a nuclear localization signal. Colocalizes with CHP1 to small punctate structures along the microtubules tracks.</text>
</comment>
<comment type="domain">
    <text evidence="2">The [IL]-x-C-x-x-[DE] motif is a proposed target motif for cysteine S-nitrosylation mediated by the iNOS-S100A8/A9 transnitrosylase complex.</text>
</comment>
<comment type="PTM">
    <text evidence="2">ISGylated.</text>
</comment>
<comment type="PTM">
    <text evidence="1 2">S-nitrosylation leads to interaction with SIAH1, followed by translocation to the nucleus. S-nitrosylation is induced by interferon-gamma and LDL(ox) implicating the iNOS-S100A8/9 transnitrosylase complex and seems to prevent interaction with phosphorylated RPL13A and to interfere with GAIT complex activity (By similarity).</text>
</comment>
<comment type="PTM">
    <text evidence="5">Sulfhydration increases catalytic activity.</text>
</comment>
<comment type="PTM">
    <text evidence="2">Oxidative stress can promote the formation of high molecular weight disulfide-linked GAPDH aggregates, through a process called nucleocytoplasmic coagulation.</text>
</comment>
<comment type="similarity">
    <text evidence="8">Belongs to the glyceraldehyde-3-phosphate dehydrogenase family.</text>
</comment>
<reference key="1">
    <citation type="journal article" date="1998" name="Arthritis Rheum.">
        <title>Collagenase 1 and collagenase 3 expression in a guinea pig model of osteoarthritis.</title>
        <authorList>
            <person name="Huebner J.L."/>
            <person name="Otterness I.G."/>
            <person name="Freund E.M."/>
            <person name="Caterson B."/>
            <person name="Kraus V.B."/>
        </authorList>
    </citation>
    <scope>NUCLEOTIDE SEQUENCE [MRNA]</scope>
    <source>
        <strain>Hartley</strain>
        <tissue>Cartilage</tissue>
    </source>
</reference>
<reference key="2">
    <citation type="submission" date="1996-11" db="EMBL/GenBank/DDBJ databases">
        <authorList>
            <person name="Aguan K."/>
            <person name="Weiner C.P."/>
        </authorList>
    </citation>
    <scope>NUCLEOTIDE SEQUENCE [MRNA] OF 37-111</scope>
</reference>
<evidence type="ECO:0000250" key="1"/>
<evidence type="ECO:0000250" key="2">
    <source>
        <dbReference type="UniProtKB" id="P04406"/>
    </source>
</evidence>
<evidence type="ECO:0000250" key="3">
    <source>
        <dbReference type="UniProtKB" id="P04797"/>
    </source>
</evidence>
<evidence type="ECO:0000250" key="4">
    <source>
        <dbReference type="UniProtKB" id="P10096"/>
    </source>
</evidence>
<evidence type="ECO:0000250" key="5">
    <source>
        <dbReference type="UniProtKB" id="P16858"/>
    </source>
</evidence>
<evidence type="ECO:0000250" key="6">
    <source>
        <dbReference type="UniProtKB" id="P22513"/>
    </source>
</evidence>
<evidence type="ECO:0000255" key="7">
    <source>
        <dbReference type="PROSITE-ProRule" id="PRU10009"/>
    </source>
</evidence>
<evidence type="ECO:0000305" key="8"/>
<keyword id="KW-0007">Acetylation</keyword>
<keyword id="KW-0053">Apoptosis</keyword>
<keyword id="KW-0963">Cytoplasm</keyword>
<keyword id="KW-0206">Cytoskeleton</keyword>
<keyword id="KW-0324">Glycolysis</keyword>
<keyword id="KW-0391">Immunity</keyword>
<keyword id="KW-0399">Innate immunity</keyword>
<keyword id="KW-1017">Isopeptide bond</keyword>
<keyword id="KW-0488">Methylation</keyword>
<keyword id="KW-0520">NAD</keyword>
<keyword id="KW-0539">Nucleus</keyword>
<keyword id="KW-0560">Oxidoreductase</keyword>
<keyword id="KW-0597">Phosphoprotein</keyword>
<keyword id="KW-1185">Reference proteome</keyword>
<keyword id="KW-0702">S-nitrosylation</keyword>
<keyword id="KW-0808">Transferase</keyword>
<keyword id="KW-0810">Translation regulation</keyword>
<keyword id="KW-0832">Ubl conjugation</keyword>
<name>G3P_CAVPO</name>
<proteinExistence type="evidence at transcript level"/>
<accession>P70685</accession>
<dbReference type="EC" id="1.2.1.12" evidence="2"/>
<dbReference type="EC" id="2.6.99.-" evidence="3"/>
<dbReference type="EMBL" id="U51572">
    <property type="protein sequence ID" value="AAC32447.1"/>
    <property type="molecule type" value="mRNA"/>
</dbReference>
<dbReference type="EMBL" id="U76741">
    <property type="protein sequence ID" value="AAB18821.1"/>
    <property type="molecule type" value="mRNA"/>
</dbReference>
<dbReference type="SMR" id="P70685"/>
<dbReference type="STRING" id="10141.ENSCPOP00000032190"/>
<dbReference type="eggNOG" id="KOG0657">
    <property type="taxonomic scope" value="Eukaryota"/>
</dbReference>
<dbReference type="InParanoid" id="P70685"/>
<dbReference type="UniPathway" id="UPA00109">
    <property type="reaction ID" value="UER00184"/>
</dbReference>
<dbReference type="Proteomes" id="UP000005447">
    <property type="component" value="Unassembled WGS sequence"/>
</dbReference>
<dbReference type="GO" id="GO:0005737">
    <property type="term" value="C:cytoplasm"/>
    <property type="evidence" value="ECO:0000250"/>
    <property type="project" value="UniProtKB"/>
</dbReference>
<dbReference type="GO" id="GO:0005829">
    <property type="term" value="C:cytosol"/>
    <property type="evidence" value="ECO:0000250"/>
    <property type="project" value="UniProtKB"/>
</dbReference>
<dbReference type="GO" id="GO:0097452">
    <property type="term" value="C:GAIT complex"/>
    <property type="evidence" value="ECO:0000250"/>
    <property type="project" value="UniProtKB"/>
</dbReference>
<dbReference type="GO" id="GO:0015630">
    <property type="term" value="C:microtubule cytoskeleton"/>
    <property type="evidence" value="ECO:0000250"/>
    <property type="project" value="UniProtKB"/>
</dbReference>
<dbReference type="GO" id="GO:0005634">
    <property type="term" value="C:nucleus"/>
    <property type="evidence" value="ECO:0000250"/>
    <property type="project" value="UniProtKB"/>
</dbReference>
<dbReference type="GO" id="GO:0004365">
    <property type="term" value="F:glyceraldehyde-3-phosphate dehydrogenase (NAD+) (phosphorylating) activity"/>
    <property type="evidence" value="ECO:0000250"/>
    <property type="project" value="UniProtKB"/>
</dbReference>
<dbReference type="GO" id="GO:0008017">
    <property type="term" value="F:microtubule binding"/>
    <property type="evidence" value="ECO:0000250"/>
    <property type="project" value="UniProtKB"/>
</dbReference>
<dbReference type="GO" id="GO:0035605">
    <property type="term" value="F:peptidyl-cysteine S-nitrosylase activity"/>
    <property type="evidence" value="ECO:0000250"/>
    <property type="project" value="UniProtKB"/>
</dbReference>
<dbReference type="GO" id="GO:0006096">
    <property type="term" value="P:glycolytic process"/>
    <property type="evidence" value="ECO:0007669"/>
    <property type="project" value="UniProtKB-UniPathway"/>
</dbReference>
<dbReference type="GO" id="GO:0045087">
    <property type="term" value="P:innate immune response"/>
    <property type="evidence" value="ECO:0007669"/>
    <property type="project" value="UniProtKB-KW"/>
</dbReference>
<dbReference type="GO" id="GO:0000226">
    <property type="term" value="P:microtubule cytoskeleton organization"/>
    <property type="evidence" value="ECO:0000250"/>
    <property type="project" value="UniProtKB"/>
</dbReference>
<dbReference type="GO" id="GO:0051402">
    <property type="term" value="P:neuron apoptotic process"/>
    <property type="evidence" value="ECO:0000250"/>
    <property type="project" value="UniProtKB"/>
</dbReference>
<dbReference type="GO" id="GO:0035606">
    <property type="term" value="P:peptidyl-cysteine S-trans-nitrosylation"/>
    <property type="evidence" value="ECO:0000250"/>
    <property type="project" value="UniProtKB"/>
</dbReference>
<dbReference type="GO" id="GO:0043123">
    <property type="term" value="P:positive regulation of canonical NF-kappaB signal transduction"/>
    <property type="evidence" value="ECO:0000250"/>
    <property type="project" value="UniProtKB"/>
</dbReference>
<dbReference type="GO" id="GO:0032481">
    <property type="term" value="P:positive regulation of type I interferon production"/>
    <property type="evidence" value="ECO:0000250"/>
    <property type="project" value="UniProtKB"/>
</dbReference>
<dbReference type="GO" id="GO:0050821">
    <property type="term" value="P:protein stabilization"/>
    <property type="evidence" value="ECO:0000250"/>
    <property type="project" value="UniProtKB"/>
</dbReference>
<dbReference type="GO" id="GO:0006417">
    <property type="term" value="P:regulation of translation"/>
    <property type="evidence" value="ECO:0007669"/>
    <property type="project" value="UniProtKB-KW"/>
</dbReference>
<dbReference type="CDD" id="cd18126">
    <property type="entry name" value="GAPDH_I_C"/>
    <property type="match status" value="1"/>
</dbReference>
<dbReference type="FunFam" id="3.30.360.10:FF:000001">
    <property type="entry name" value="Glyceraldehyde-3-phosphate dehydrogenase"/>
    <property type="match status" value="1"/>
</dbReference>
<dbReference type="Gene3D" id="3.30.360.10">
    <property type="entry name" value="Dihydrodipicolinate Reductase, domain 2"/>
    <property type="match status" value="1"/>
</dbReference>
<dbReference type="InterPro" id="IPR020831">
    <property type="entry name" value="GlycerAld/Erythrose_P_DH"/>
</dbReference>
<dbReference type="InterPro" id="IPR020829">
    <property type="entry name" value="GlycerAld_3-P_DH_cat"/>
</dbReference>
<dbReference type="PANTHER" id="PTHR10836">
    <property type="entry name" value="GLYCERALDEHYDE 3-PHOSPHATE DEHYDROGENASE"/>
    <property type="match status" value="1"/>
</dbReference>
<dbReference type="PANTHER" id="PTHR10836:SF111">
    <property type="entry name" value="GLYCERALDEHYDE-3-PHOSPHATE DEHYDROGENASE"/>
    <property type="match status" value="1"/>
</dbReference>
<dbReference type="Pfam" id="PF02800">
    <property type="entry name" value="Gp_dh_C"/>
    <property type="match status" value="1"/>
</dbReference>
<dbReference type="PRINTS" id="PR00078">
    <property type="entry name" value="G3PDHDRGNASE"/>
</dbReference>
<dbReference type="SUPFAM" id="SSF55347">
    <property type="entry name" value="Glyceraldehyde-3-phosphate dehydrogenase-like, C-terminal domain"/>
    <property type="match status" value="1"/>
</dbReference>
<feature type="chain" id="PRO_0000145483" description="Glyceraldehyde-3-phosphate dehydrogenase">
    <location>
        <begin position="1" status="less than"/>
        <end position="123" status="greater than"/>
    </location>
</feature>
<feature type="short sequence motif" description="[IL]-x-C-x-x-[DE] motif" evidence="2">
    <location>
        <begin position="77"/>
        <end position="82"/>
    </location>
</feature>
<feature type="binding site" evidence="6">
    <location>
        <position position="14"/>
    </location>
    <ligand>
        <name>D-glyceraldehyde 3-phosphate</name>
        <dbReference type="ChEBI" id="CHEBI:59776"/>
    </ligand>
</feature>
<feature type="binding site" evidence="6">
    <location>
        <begin position="43"/>
        <end position="44"/>
    </location>
    <ligand>
        <name>D-glyceraldehyde 3-phosphate</name>
        <dbReference type="ChEBI" id="CHEBI:59776"/>
    </ligand>
</feature>
<feature type="binding site" evidence="6">
    <location>
        <position position="66"/>
    </location>
    <ligand>
        <name>D-glyceraldehyde 3-phosphate</name>
        <dbReference type="ChEBI" id="CHEBI:59776"/>
    </ligand>
</feature>
<feature type="site" description="Activates thiol group during catalysis" evidence="2">
    <location>
        <position position="11"/>
    </location>
</feature>
<feature type="modified residue" description="Phosphothreonine" evidence="2">
    <location>
        <position position="9"/>
    </location>
</feature>
<feature type="modified residue" description="Phosphothreonine" evidence="2">
    <location>
        <position position="14"/>
    </location>
</feature>
<feature type="modified residue" description="Phosphothreonine" evidence="2">
    <location>
        <position position="16"/>
    </location>
</feature>
<feature type="modified residue" description="N6,N6-dimethyllysine; alternate" evidence="2">
    <location>
        <position position="26"/>
    </location>
</feature>
<feature type="modified residue" description="N6-acetyllysine; alternate" evidence="2">
    <location>
        <position position="26"/>
    </location>
</feature>
<feature type="modified residue" description="N6-malonyllysine; alternate" evidence="2">
    <location>
        <position position="26"/>
    </location>
</feature>
<feature type="modified residue" description="Phosphothreonine" evidence="2">
    <location>
        <position position="43"/>
    </location>
</feature>
<feature type="modified residue" description="N6,N6-dimethyllysine; alternate" evidence="2">
    <location>
        <position position="47"/>
    </location>
</feature>
<feature type="modified residue" description="N6-malonyllysine; alternate" evidence="2">
    <location>
        <position position="47"/>
    </location>
</feature>
<feature type="modified residue" description="N6-acetyllysine" evidence="2">
    <location>
        <position position="51"/>
    </location>
</feature>
<feature type="modified residue" description="Deamidated asparagine" evidence="2">
    <location>
        <position position="57"/>
    </location>
</feature>
<feature type="modified residue" description="N6,N6-dimethyllysine; alternate" evidence="2">
    <location>
        <position position="59"/>
    </location>
</feature>
<feature type="modified residue" description="N6-acetyllysine; alternate" evidence="2">
    <location>
        <position position="59"/>
    </location>
</feature>
<feature type="modified residue" description="Phosphothreonine" evidence="2">
    <location>
        <position position="61"/>
    </location>
</feature>
<feature type="modified residue" description="Phosphothreonine" evidence="2">
    <location>
        <position position="69"/>
    </location>
</feature>
<feature type="modified residue" description="Phosphoserine" evidence="2">
    <location>
        <position position="73"/>
    </location>
</feature>
<feature type="modified residue" description="S-(2-succinyl)cysteine" evidence="3">
    <location>
        <position position="79"/>
    </location>
</feature>
<feature type="modified residue" description="S-nitrosocysteine" evidence="2">
    <location>
        <position position="79"/>
    </location>
</feature>
<feature type="modified residue" description="N6-acetyllysine" evidence="2">
    <location>
        <position position="86"/>
    </location>
</feature>
<feature type="modified residue" description="N6,N6-dimethyllysine" evidence="2">
    <location>
        <position position="92"/>
    </location>
</feature>
<feature type="modified residue" description="N6,N6-dimethyllysine" evidence="2">
    <location>
        <position position="95"/>
    </location>
</feature>
<feature type="cross-link" description="Glycyl lysine isopeptide (Lys-Gly) (interchain with G-Cter in SUMO2)" evidence="2">
    <location>
        <position position="18"/>
    </location>
</feature>
<feature type="non-terminal residue">
    <location>
        <position position="1"/>
    </location>
</feature>
<feature type="non-terminal residue">
    <location>
        <position position="123"/>
    </location>
</feature>